<proteinExistence type="evidence at protein level"/>
<gene>
    <name evidence="12" type="primary">Lhcb4</name>
</gene>
<dbReference type="EMBL" id="AB051207">
    <property type="protein sequence ID" value="BAB64415.1"/>
    <property type="molecule type" value="Genomic_DNA"/>
</dbReference>
<dbReference type="EMBL" id="AB051211">
    <property type="protein sequence ID" value="BAB64419.1"/>
    <property type="molecule type" value="mRNA"/>
</dbReference>
<dbReference type="EMBL" id="AY171230">
    <property type="protein sequence ID" value="AAO16494.1"/>
    <property type="molecule type" value="mRNA"/>
</dbReference>
<dbReference type="RefSeq" id="XP_001697193.1">
    <property type="nucleotide sequence ID" value="XM_001697141.1"/>
</dbReference>
<dbReference type="PDB" id="6KAC">
    <property type="method" value="EM"/>
    <property type="resolution" value="2.70 A"/>
    <property type="chains" value="R/r=1-280"/>
</dbReference>
<dbReference type="PDB" id="6KAD">
    <property type="method" value="EM"/>
    <property type="resolution" value="3.40 A"/>
    <property type="chains" value="R/r=1-280"/>
</dbReference>
<dbReference type="PDB" id="6KAF">
    <property type="method" value="EM"/>
    <property type="resolution" value="3.73 A"/>
    <property type="chains" value="R/r=1-280"/>
</dbReference>
<dbReference type="PDBsum" id="6KAC"/>
<dbReference type="PDBsum" id="6KAD"/>
<dbReference type="PDBsum" id="6KAF"/>
<dbReference type="EMDB" id="EMD-9955"/>
<dbReference type="EMDB" id="EMD-9956"/>
<dbReference type="EMDB" id="EMD-9957"/>
<dbReference type="SMR" id="Q93WD2"/>
<dbReference type="DIP" id="DIP-48401N"/>
<dbReference type="IntAct" id="Q93WD2">
    <property type="interactions" value="5"/>
</dbReference>
<dbReference type="iPTMnet" id="Q93WD2"/>
<dbReference type="PaxDb" id="3055-EDP00448"/>
<dbReference type="ProMEX" id="Q93WD2"/>
<dbReference type="EnsemblPlants" id="PNW70449">
    <property type="protein sequence ID" value="PNW70449"/>
    <property type="gene ID" value="CHLRE_17g720250v5"/>
</dbReference>
<dbReference type="Gramene" id="PNW70449">
    <property type="protein sequence ID" value="PNW70449"/>
    <property type="gene ID" value="CHLRE_17g720250v5"/>
</dbReference>
<dbReference type="KEGG" id="cre:CHLRE_17g720250v5"/>
<dbReference type="eggNOG" id="ENOG502QRH9">
    <property type="taxonomic scope" value="Eukaryota"/>
</dbReference>
<dbReference type="HOGENOM" id="CLU_057943_0_0_1"/>
<dbReference type="OMA" id="ERPLWYP"/>
<dbReference type="OrthoDB" id="423598at2759"/>
<dbReference type="BioCyc" id="CHLAMY:CHLREDRAFT_184810-MONOMER"/>
<dbReference type="BioCyc" id="MetaCyc:CHLREDRAFT_184810-MONOMER"/>
<dbReference type="GO" id="GO:0009522">
    <property type="term" value="C:photosystem I"/>
    <property type="evidence" value="ECO:0007669"/>
    <property type="project" value="UniProtKB-KW"/>
</dbReference>
<dbReference type="GO" id="GO:0009523">
    <property type="term" value="C:photosystem II"/>
    <property type="evidence" value="ECO:0007669"/>
    <property type="project" value="UniProtKB-KW"/>
</dbReference>
<dbReference type="GO" id="GO:0009503">
    <property type="term" value="C:thylakoid light-harvesting complex"/>
    <property type="evidence" value="ECO:0000314"/>
    <property type="project" value="UniProtKB"/>
</dbReference>
<dbReference type="GO" id="GO:0016168">
    <property type="term" value="F:chlorophyll binding"/>
    <property type="evidence" value="ECO:0007669"/>
    <property type="project" value="UniProtKB-KW"/>
</dbReference>
<dbReference type="GO" id="GO:0046872">
    <property type="term" value="F:metal ion binding"/>
    <property type="evidence" value="ECO:0007669"/>
    <property type="project" value="UniProtKB-KW"/>
</dbReference>
<dbReference type="GO" id="GO:0009765">
    <property type="term" value="P:photosynthesis, light harvesting"/>
    <property type="evidence" value="ECO:0007669"/>
    <property type="project" value="InterPro"/>
</dbReference>
<dbReference type="Gene3D" id="1.10.3460.10">
    <property type="entry name" value="Chlorophyll a/b binding protein domain"/>
    <property type="match status" value="1"/>
</dbReference>
<dbReference type="InterPro" id="IPR001344">
    <property type="entry name" value="Chloro_AB-bd_pln"/>
</dbReference>
<dbReference type="InterPro" id="IPR022796">
    <property type="entry name" value="Chloroa_b-bind"/>
</dbReference>
<dbReference type="PANTHER" id="PTHR21649">
    <property type="entry name" value="CHLOROPHYLL A/B BINDING PROTEIN"/>
    <property type="match status" value="1"/>
</dbReference>
<dbReference type="Pfam" id="PF00504">
    <property type="entry name" value="Chloroa_b-bind"/>
    <property type="match status" value="1"/>
</dbReference>
<dbReference type="SUPFAM" id="SSF103511">
    <property type="entry name" value="Chlorophyll a-b binding protein"/>
    <property type="match status" value="1"/>
</dbReference>
<organism>
    <name type="scientific">Chlamydomonas reinhardtii</name>
    <name type="common">Chlamydomonas smithii</name>
    <dbReference type="NCBI Taxonomy" id="3055"/>
    <lineage>
        <taxon>Eukaryota</taxon>
        <taxon>Viridiplantae</taxon>
        <taxon>Chlorophyta</taxon>
        <taxon>core chlorophytes</taxon>
        <taxon>Chlorophyceae</taxon>
        <taxon>CS clade</taxon>
        <taxon>Chlamydomonadales</taxon>
        <taxon>Chlamydomonadaceae</taxon>
        <taxon>Chlamydomonas</taxon>
    </lineage>
</organism>
<protein>
    <recommendedName>
        <fullName>Chlorophyll a-b binding protein CP29</fullName>
    </recommendedName>
    <alternativeName>
        <fullName>Lhcbm4</fullName>
    </alternativeName>
</protein>
<reference evidence="12" key="1">
    <citation type="journal article" date="2001" name="Plant Cell Physiol.">
        <title>Identification of Lhcb gene family encoding the light-harvesting chlorophyll-a/b proteins of photosystem II in Chlamydomonas reinhardtii.</title>
        <authorList>
            <person name="Teramoto H."/>
            <person name="Ono T.-A."/>
            <person name="Minagawa J."/>
        </authorList>
    </citation>
    <scope>NUCLEOTIDE SEQUENCE [GENOMIC DNA / MRNA]</scope>
    <source>
        <strain evidence="5">2137</strain>
        <strain evidence="5">IAM C-9</strain>
    </source>
</reference>
<reference evidence="10" key="2">
    <citation type="journal article" date="2003" name="Physiol. Plantarum">
        <title>Light-harvesting complex gene expression is controlled by both transcriptional and post-transcriptional mechanisms during photoacclimation in Chlamydomonas reinhardtii.</title>
        <authorList>
            <person name="Durnford D.G."/>
            <person name="Price J.A."/>
            <person name="McKim S.M."/>
            <person name="Sarchfield M.L."/>
        </authorList>
    </citation>
    <scope>NUCLEOTIDE SEQUENCE [MRNA]</scope>
    <scope>REPRESSION BY LIGHT</scope>
    <source>
        <strain evidence="11">137c / CC-125</strain>
    </source>
</reference>
<reference evidence="10" key="3">
    <citation type="journal article" date="2004" name="FEBS Lett.">
        <title>The transit peptide of CP29 thylakoid protein in Chlamydomonas reinhardtii is not removed but undergoes acetylation and phosphorylation.</title>
        <authorList>
            <person name="Turkina M.V."/>
            <person name="Villarejo A."/>
            <person name="Vener A.V."/>
        </authorList>
    </citation>
    <scope>PROTEIN SEQUENCE OF 2-13</scope>
    <scope>SUBCELLULAR LOCATION</scope>
    <scope>PHOSPHORYLATION AT THR-7</scope>
    <scope>ACETYLATION AT VAL-2</scope>
    <source>
        <strain evidence="7">cw92</strain>
    </source>
</reference>
<reference evidence="10" key="4">
    <citation type="journal article" date="2005" name="FEBS J.">
        <title>Light-harvesting complex II protein CP29 binds to photosystem I of Chlamydomonas reinhardtii under State 2 conditions.</title>
        <authorList>
            <person name="Kargul J."/>
            <person name="Turkina M.V."/>
            <person name="Nield J."/>
            <person name="Benson S."/>
            <person name="Vener A.V."/>
            <person name="Barber J."/>
        </authorList>
    </citation>
    <scope>PROTEIN SEQUENCE OF 2-13; 15-25; 31-38 AND 72-132</scope>
    <scope>FUNCTION</scope>
    <scope>PHOSPHORYLATION AT THR-7; THR-17; THR-33 AND SER-103</scope>
    <scope>ACETYLATION AT VAL-2</scope>
</reference>
<reference evidence="10" key="5">
    <citation type="journal article" date="2002" name="Plant Physiol.">
        <title>Light-intensity-dependent expression of Lhc gene family encoding light-harvesting chlorophyll-a/b proteins of photosystem II in Chlamydomonas reinhardtii.</title>
        <authorList>
            <person name="Teramoto H."/>
            <person name="Nakamori A."/>
            <person name="Minagawa J."/>
            <person name="Ono T.-A."/>
        </authorList>
    </citation>
    <scope>REPRESSION</scope>
    <source>
        <strain evidence="6">IAM C-9</strain>
    </source>
</reference>
<evidence type="ECO:0000250" key="1"/>
<evidence type="ECO:0000250" key="2">
    <source>
        <dbReference type="UniProtKB" id="P12333"/>
    </source>
</evidence>
<evidence type="ECO:0000255" key="3"/>
<evidence type="ECO:0000256" key="4">
    <source>
        <dbReference type="SAM" id="MobiDB-lite"/>
    </source>
</evidence>
<evidence type="ECO:0000269" key="5">
    <source>
    </source>
</evidence>
<evidence type="ECO:0000269" key="6">
    <source>
    </source>
</evidence>
<evidence type="ECO:0000269" key="7">
    <source>
    </source>
</evidence>
<evidence type="ECO:0000269" key="8">
    <source>
    </source>
</evidence>
<evidence type="ECO:0000269" key="9">
    <source ref="2"/>
</evidence>
<evidence type="ECO:0000305" key="10"/>
<evidence type="ECO:0000312" key="11">
    <source>
        <dbReference type="EMBL" id="AAO16494.1"/>
    </source>
</evidence>
<evidence type="ECO:0000312" key="12">
    <source>
        <dbReference type="EMBL" id="BAB64419.1"/>
    </source>
</evidence>
<evidence type="ECO:0007829" key="13">
    <source>
        <dbReference type="PDB" id="6KAC"/>
    </source>
</evidence>
<comment type="function">
    <text evidence="8 10">The light-harvesting complex (LHC) functions as a light receptor, it captures and delivers excitation energy to photosystems with which it is closely associated. CP29 facilitates the State 1 to State 2 transition, where State I is induced by excess photosystem I (PSI) light and State 2 is induced by excess photosystem II (PSII) light.</text>
</comment>
<comment type="cofactor">
    <text evidence="2">Binds at least 14 chlorophylls (8 Chl-a and 6 Chl-b) and carotenoids such as lutein and neoxanthin.</text>
</comment>
<comment type="subunit">
    <text evidence="10">The LHC complex consists of chlorophyll a-b binding proteins.</text>
</comment>
<comment type="subcellular location">
    <subcellularLocation>
        <location evidence="7">Plastid</location>
        <location evidence="7">Chloroplast thylakoid membrane</location>
        <topology evidence="7">Multi-pass membrane protein</topology>
    </subcellularLocation>
</comment>
<comment type="induction">
    <text evidence="6 9">Repressed by high light intensity due to a transient decrease in mRNA stability. Also down-regulated at lower light intensities by low temperature or limited carbon dioxide supply.</text>
</comment>
<comment type="domain">
    <text>The N-terminus of the protein extends into the stroma where it is involved with adhesion of granal membranes and post-translational modifications; both are believed to mediate the distribution of excitation energy between photosystems I and II.</text>
</comment>
<comment type="PTM">
    <text evidence="7 8">Reversible phosphorylation plays a role in the State transition process and determines the affinity of LHCII for PSI and PSII.</text>
</comment>
<comment type="similarity">
    <text evidence="3">Belongs to the light-harvesting chlorophyll a/b-binding (LHC) protein family.</text>
</comment>
<accession>Q93WD2</accession>
<keyword id="KW-0002">3D-structure</keyword>
<keyword id="KW-0007">Acetylation</keyword>
<keyword id="KW-0148">Chlorophyll</keyword>
<keyword id="KW-0150">Chloroplast</keyword>
<keyword id="KW-0157">Chromophore</keyword>
<keyword id="KW-0903">Direct protein sequencing</keyword>
<keyword id="KW-0460">Magnesium</keyword>
<keyword id="KW-0472">Membrane</keyword>
<keyword id="KW-0479">Metal-binding</keyword>
<keyword id="KW-0597">Phosphoprotein</keyword>
<keyword id="KW-0602">Photosynthesis</keyword>
<keyword id="KW-0603">Photosystem I</keyword>
<keyword id="KW-0604">Photosystem II</keyword>
<keyword id="KW-0934">Plastid</keyword>
<keyword id="KW-0793">Thylakoid</keyword>
<keyword id="KW-0812">Transmembrane</keyword>
<keyword id="KW-1133">Transmembrane helix</keyword>
<name>CB29_CHLRE</name>
<sequence length="280" mass="29938">MVFKFPTPPGTQKKAGTTATKPAPKATTKKVATSTGTRSGGVGYRKYQGDALWLPNTTRPEWLDGSLPGDRGFDPLGLSKPSEFVVIGVDENDQNAAKNNKGSVEAIVQATPDEVSSENRLAPYSEVFGLARFRECELIHGRWAMLACLGALVAEATTGVSWVEAGKVELDGASYAGLSLPFSITQLIWIEVILVGGAEFYRNSETNPEKRCYPGGVFDPLKLASEDEERAFRLKTAEIKHARLAMVSFFGYGVQALSTGEGALGSLAKFADGLNNGKGL</sequence>
<feature type="initiator methionine" description="Removed" evidence="7 8">
    <location>
        <position position="1"/>
    </location>
</feature>
<feature type="chain" id="PRO_0000165470" description="Chlorophyll a-b binding protein CP29" evidence="7">
    <location>
        <begin position="2"/>
        <end position="280"/>
    </location>
</feature>
<feature type="transmembrane region" description="Helical" evidence="3">
    <location>
        <begin position="143"/>
        <end position="163"/>
    </location>
</feature>
<feature type="transmembrane region" description="Helical" evidence="3">
    <location>
        <begin position="176"/>
        <end position="196"/>
    </location>
</feature>
<feature type="transmembrane region" description="Helical" evidence="3">
    <location>
        <begin position="244"/>
        <end position="264"/>
    </location>
</feature>
<feature type="region of interest" description="Disordered" evidence="4">
    <location>
        <begin position="1"/>
        <end position="42"/>
    </location>
</feature>
<feature type="compositionally biased region" description="Low complexity" evidence="4">
    <location>
        <begin position="10"/>
        <end position="37"/>
    </location>
</feature>
<feature type="binding site" description="axial binding residue" evidence="1">
    <location>
        <position position="47"/>
    </location>
    <ligand>
        <name>chlorophyll b</name>
        <dbReference type="ChEBI" id="CHEBI:61721"/>
        <label>1</label>
    </ligand>
    <ligandPart>
        <name>Mg</name>
        <dbReference type="ChEBI" id="CHEBI:25107"/>
    </ligandPart>
</feature>
<feature type="binding site" evidence="2">
    <location>
        <position position="73"/>
    </location>
    <ligand>
        <name>chlorophyll a</name>
        <dbReference type="ChEBI" id="CHEBI:58416"/>
        <label>1</label>
    </ligand>
</feature>
<feature type="binding site" evidence="2">
    <location>
        <position position="79"/>
    </location>
    <ligand>
        <name>chlorophyll a</name>
        <dbReference type="ChEBI" id="CHEBI:58416"/>
        <label>1</label>
    </ligand>
</feature>
<feature type="binding site" description="axial binding residue" evidence="2">
    <location>
        <position position="137"/>
    </location>
    <ligand>
        <name>chlorophyll a</name>
        <dbReference type="ChEBI" id="CHEBI:58416"/>
        <label>1</label>
    </ligand>
    <ligandPart>
        <name>Mg</name>
        <dbReference type="ChEBI" id="CHEBI:25107"/>
    </ligandPart>
</feature>
<feature type="binding site" description="axial binding residue" evidence="2">
    <location>
        <position position="140"/>
    </location>
    <ligand>
        <name>chlorophyll a</name>
        <dbReference type="ChEBI" id="CHEBI:58416"/>
        <label>2</label>
    </ligand>
    <ligandPart>
        <name>Mg</name>
        <dbReference type="ChEBI" id="CHEBI:25107"/>
    </ligandPart>
</feature>
<feature type="binding site" evidence="2">
    <location>
        <position position="183"/>
    </location>
    <ligand>
        <name>chlorophyll b</name>
        <dbReference type="ChEBI" id="CHEBI:61721"/>
        <label>3</label>
    </ligand>
</feature>
<feature type="binding site" description="axial binding residue" evidence="2">
    <location>
        <position position="199"/>
    </location>
    <ligand>
        <name>chlorophyll b</name>
        <dbReference type="ChEBI" id="CHEBI:61721"/>
        <label>3</label>
    </ligand>
    <ligandPart>
        <name>Mg</name>
        <dbReference type="ChEBI" id="CHEBI:25107"/>
    </ligandPart>
</feature>
<feature type="binding site" evidence="2">
    <location>
        <position position="202"/>
    </location>
    <ligand>
        <name>chlorophyll b</name>
        <dbReference type="ChEBI" id="CHEBI:61721"/>
        <label>4</label>
    </ligand>
</feature>
<feature type="binding site" description="axial binding residue" evidence="2">
    <location>
        <position position="238"/>
    </location>
    <ligand>
        <name>chlorophyll a</name>
        <dbReference type="ChEBI" id="CHEBI:58416"/>
        <label>3</label>
    </ligand>
    <ligandPart>
        <name>Mg</name>
        <dbReference type="ChEBI" id="CHEBI:25107"/>
    </ligandPart>
</feature>
<feature type="binding site" description="axial binding residue" evidence="2">
    <location>
        <position position="241"/>
    </location>
    <ligand>
        <name>chlorophyll a</name>
        <dbReference type="ChEBI" id="CHEBI:58416"/>
        <label>4</label>
    </ligand>
    <ligandPart>
        <name>Mg</name>
        <dbReference type="ChEBI" id="CHEBI:25107"/>
    </ligandPart>
</feature>
<feature type="binding site" evidence="2">
    <location>
        <position position="243"/>
    </location>
    <ligand>
        <name>chlorophyll a</name>
        <dbReference type="ChEBI" id="CHEBI:58416"/>
        <label>1</label>
    </ligand>
</feature>
<feature type="binding site" description="axial binding residue" evidence="2">
    <location>
        <position position="255"/>
    </location>
    <ligand>
        <name>chlorophyll a</name>
        <dbReference type="ChEBI" id="CHEBI:58416"/>
        <label>5</label>
    </ligand>
    <ligandPart>
        <name>Mg</name>
        <dbReference type="ChEBI" id="CHEBI:25107"/>
    </ligandPart>
</feature>
<feature type="modified residue" description="N-acetylvaline" evidence="7 8">
    <location>
        <position position="2"/>
    </location>
</feature>
<feature type="modified residue" description="Phosphothreonine; in State 1 and State 2" evidence="7 8">
    <location>
        <position position="7"/>
    </location>
</feature>
<feature type="modified residue" description="Phosphothreonine; in State 2" evidence="8">
    <location>
        <position position="17"/>
    </location>
</feature>
<feature type="modified residue" description="Phosphothreonine; in State 1 and State 2" evidence="8">
    <location>
        <position position="33"/>
    </location>
</feature>
<feature type="modified residue" description="Phosphoserine; in State 2" evidence="8">
    <location>
        <position position="103"/>
    </location>
</feature>
<feature type="strand" evidence="13">
    <location>
        <begin position="64"/>
        <end position="69"/>
    </location>
</feature>
<feature type="strand" evidence="13">
    <location>
        <begin position="84"/>
        <end position="87"/>
    </location>
</feature>
<feature type="strand" evidence="13">
    <location>
        <begin position="104"/>
        <end position="108"/>
    </location>
</feature>
<feature type="helix" evidence="13">
    <location>
        <begin position="130"/>
        <end position="156"/>
    </location>
</feature>
<feature type="turn" evidence="13">
    <location>
        <begin position="162"/>
        <end position="166"/>
    </location>
</feature>
<feature type="helix" evidence="13">
    <location>
        <begin position="167"/>
        <end position="171"/>
    </location>
</feature>
<feature type="helix" evidence="13">
    <location>
        <begin position="184"/>
        <end position="202"/>
    </location>
</feature>
<feature type="helix" evidence="13">
    <location>
        <begin position="208"/>
        <end position="212"/>
    </location>
</feature>
<feature type="helix" evidence="13">
    <location>
        <begin position="216"/>
        <end position="218"/>
    </location>
</feature>
<feature type="strand" evidence="13">
    <location>
        <begin position="229"/>
        <end position="231"/>
    </location>
</feature>
<feature type="helix" evidence="13">
    <location>
        <begin position="238"/>
        <end position="256"/>
    </location>
</feature>